<gene>
    <name type="ordered locus">MIMI_L766</name>
</gene>
<sequence>MTYQTFFLISDPDNLDYPIYIVYDKSRVLDYFGDIFYTQSTTITEIELGDTNPDFKISILHNNNYLTSHVIKSTKYSLLDVNTVQMLLDYKDPDYELKSTCHLYIFYMTKNRFDICDYLIASNIKYIDSFGNISLLNSTNLNNYQLIKYIIDNNEFFNCRYYYLMLGILRYTKFYDLVDYILELISKSNNHIDYNSLLMELFSKFDCMGSLINSEIDAFQIKKLIDGNYFDEKVLFDTVICNNFELTKYLVEKGFNYDFDTIINSNVKFDVLKYFIELGNYLTDDHIYMILCNTSCEYYEKIIYLVDNNHITEKYFTKSIISRIIHFEFYLLDYLTNKLNIIELIDLDLLMKTSIRCNETVMVKKCIDYGINPDEYMEFAIKHDICIAKKLMELGGNIPDNMCIYNPDAYLTIESIDIILENNYDSLENLLPKIINNCDSEIIMYIIKKLTDTTIIIPHGLIKIFIRSYYWGRGNDIYSGIINSNLNFDDYQQIIIGIMRKEYNKIEQLIFSSTYYNSIELLFVVTLSENIELFKLLLEINCNDNNYLSWAFVFSIGCFKLMKYIVDNYNIDIYQRQFEVCIMSLQNYYRCYNQSDQIKFYLLLMGYEISCFNNKKNYNENIPLVKFMREMGVTLV</sequence>
<keyword id="KW-0040">ANK repeat</keyword>
<keyword id="KW-1185">Reference proteome</keyword>
<keyword id="KW-0677">Repeat</keyword>
<protein>
    <recommendedName>
        <fullName>Putative ankyrin repeat protein L766</fullName>
    </recommendedName>
</protein>
<reference key="1">
    <citation type="journal article" date="2004" name="Science">
        <title>The 1.2-megabase genome sequence of Mimivirus.</title>
        <authorList>
            <person name="Raoult D."/>
            <person name="Audic S."/>
            <person name="Robert C."/>
            <person name="Abergel C."/>
            <person name="Renesto P."/>
            <person name="Ogata H."/>
            <person name="La Scola B."/>
            <person name="Susan M."/>
            <person name="Claverie J.-M."/>
        </authorList>
    </citation>
    <scope>NUCLEOTIDE SEQUENCE [LARGE SCALE GENOMIC DNA]</scope>
    <source>
        <strain>Rowbotham-Bradford</strain>
    </source>
</reference>
<organism>
    <name type="scientific">Acanthamoeba polyphaga mimivirus</name>
    <name type="common">APMV</name>
    <dbReference type="NCBI Taxonomy" id="212035"/>
    <lineage>
        <taxon>Viruses</taxon>
        <taxon>Varidnaviria</taxon>
        <taxon>Bamfordvirae</taxon>
        <taxon>Nucleocytoviricota</taxon>
        <taxon>Megaviricetes</taxon>
        <taxon>Imitervirales</taxon>
        <taxon>Mimiviridae</taxon>
        <taxon>Megamimivirinae</taxon>
        <taxon>Mimivirus</taxon>
        <taxon>Mimivirus bradfordmassiliense</taxon>
    </lineage>
</organism>
<dbReference type="EMBL" id="AY653733">
    <property type="protein sequence ID" value="AAV51026.1"/>
    <property type="molecule type" value="Genomic_DNA"/>
</dbReference>
<dbReference type="SMR" id="Q5UPQ2"/>
<dbReference type="KEGG" id="vg:9925424"/>
<dbReference type="OrthoDB" id="32221at10239"/>
<dbReference type="Proteomes" id="UP000001134">
    <property type="component" value="Genome"/>
</dbReference>
<name>YL766_MIMIV</name>
<accession>Q5UPQ2</accession>
<organismHost>
    <name type="scientific">Acanthamoeba polyphaga</name>
    <name type="common">Amoeba</name>
    <dbReference type="NCBI Taxonomy" id="5757"/>
</organismHost>
<proteinExistence type="predicted"/>
<feature type="chain" id="PRO_0000067193" description="Putative ankyrin repeat protein L766">
    <location>
        <begin position="1"/>
        <end position="636"/>
    </location>
</feature>
<feature type="repeat" description="ANK 1">
    <location>
        <begin position="63"/>
        <end position="97"/>
    </location>
</feature>
<feature type="repeat" description="ANK 2">
    <location>
        <begin position="99"/>
        <end position="129"/>
    </location>
</feature>
<feature type="repeat" description="ANK 3">
    <location>
        <begin position="130"/>
        <end position="159"/>
    </location>
</feature>
<feature type="repeat" description="ANK 4">
    <location>
        <begin position="161"/>
        <end position="190"/>
    </location>
</feature>
<feature type="repeat" description="ANK 5">
    <location>
        <begin position="230"/>
        <end position="259"/>
    </location>
</feature>
<feature type="repeat" description="ANK 6">
    <location>
        <begin position="261"/>
        <end position="284"/>
    </location>
</feature>
<feature type="repeat" description="ANK 7">
    <location>
        <begin position="322"/>
        <end position="355"/>
    </location>
</feature>
<feature type="repeat" description="ANK 8">
    <location>
        <begin position="372"/>
        <end position="400"/>
    </location>
</feature>
<feature type="repeat" description="ANK 9">
    <location>
        <begin position="425"/>
        <end position="455"/>
    </location>
</feature>
<feature type="repeat" description="ANK 10">
    <location>
        <begin position="517"/>
        <end position="546"/>
    </location>
</feature>
<feature type="repeat" description="ANK 11">
    <location>
        <begin position="548"/>
        <end position="575"/>
    </location>
</feature>